<gene>
    <name evidence="1" type="primary">cobQ</name>
    <name type="ordered locus">MmarC7_0462</name>
</gene>
<dbReference type="EMBL" id="CP000745">
    <property type="protein sequence ID" value="ABR65531.1"/>
    <property type="molecule type" value="Genomic_DNA"/>
</dbReference>
<dbReference type="STRING" id="426368.MmarC7_0462"/>
<dbReference type="KEGG" id="mmz:MmarC7_0462"/>
<dbReference type="eggNOG" id="arCOG00105">
    <property type="taxonomic scope" value="Archaea"/>
</dbReference>
<dbReference type="HOGENOM" id="CLU_019250_2_2_2"/>
<dbReference type="OrthoDB" id="53136at2157"/>
<dbReference type="UniPathway" id="UPA00148"/>
<dbReference type="GO" id="GO:0015420">
    <property type="term" value="F:ABC-type vitamin B12 transporter activity"/>
    <property type="evidence" value="ECO:0007669"/>
    <property type="project" value="UniProtKB-UniRule"/>
</dbReference>
<dbReference type="GO" id="GO:0003824">
    <property type="term" value="F:catalytic activity"/>
    <property type="evidence" value="ECO:0007669"/>
    <property type="project" value="InterPro"/>
</dbReference>
<dbReference type="GO" id="GO:0009236">
    <property type="term" value="P:cobalamin biosynthetic process"/>
    <property type="evidence" value="ECO:0007669"/>
    <property type="project" value="UniProtKB-UniRule"/>
</dbReference>
<dbReference type="CDD" id="cd05389">
    <property type="entry name" value="CobQ_N"/>
    <property type="match status" value="1"/>
</dbReference>
<dbReference type="CDD" id="cd01750">
    <property type="entry name" value="GATase1_CobQ"/>
    <property type="match status" value="1"/>
</dbReference>
<dbReference type="Gene3D" id="3.40.50.880">
    <property type="match status" value="1"/>
</dbReference>
<dbReference type="Gene3D" id="3.40.50.300">
    <property type="entry name" value="P-loop containing nucleotide triphosphate hydrolases"/>
    <property type="match status" value="1"/>
</dbReference>
<dbReference type="HAMAP" id="MF_00028">
    <property type="entry name" value="CobQ"/>
    <property type="match status" value="1"/>
</dbReference>
<dbReference type="InterPro" id="IPR029062">
    <property type="entry name" value="Class_I_gatase-like"/>
</dbReference>
<dbReference type="InterPro" id="IPR002586">
    <property type="entry name" value="CobQ/CobB/MinD/ParA_Nub-bd_dom"/>
</dbReference>
<dbReference type="InterPro" id="IPR033949">
    <property type="entry name" value="CobQ_GATase1"/>
</dbReference>
<dbReference type="InterPro" id="IPR047045">
    <property type="entry name" value="CobQ_N"/>
</dbReference>
<dbReference type="InterPro" id="IPR004459">
    <property type="entry name" value="CobQ_synth"/>
</dbReference>
<dbReference type="InterPro" id="IPR011698">
    <property type="entry name" value="GATase_3"/>
</dbReference>
<dbReference type="InterPro" id="IPR027417">
    <property type="entry name" value="P-loop_NTPase"/>
</dbReference>
<dbReference type="NCBIfam" id="TIGR00313">
    <property type="entry name" value="cobQ"/>
    <property type="match status" value="1"/>
</dbReference>
<dbReference type="NCBIfam" id="NF001989">
    <property type="entry name" value="PRK00784.1"/>
    <property type="match status" value="1"/>
</dbReference>
<dbReference type="PANTHER" id="PTHR21343:SF1">
    <property type="entry name" value="COBYRIC ACID SYNTHASE"/>
    <property type="match status" value="1"/>
</dbReference>
<dbReference type="PANTHER" id="PTHR21343">
    <property type="entry name" value="DETHIOBIOTIN SYNTHETASE"/>
    <property type="match status" value="1"/>
</dbReference>
<dbReference type="Pfam" id="PF01656">
    <property type="entry name" value="CbiA"/>
    <property type="match status" value="1"/>
</dbReference>
<dbReference type="Pfam" id="PF07685">
    <property type="entry name" value="GATase_3"/>
    <property type="match status" value="1"/>
</dbReference>
<dbReference type="SUPFAM" id="SSF52317">
    <property type="entry name" value="Class I glutamine amidotransferase-like"/>
    <property type="match status" value="1"/>
</dbReference>
<dbReference type="SUPFAM" id="SSF52540">
    <property type="entry name" value="P-loop containing nucleoside triphosphate hydrolases"/>
    <property type="match status" value="1"/>
</dbReference>
<dbReference type="PROSITE" id="PS51274">
    <property type="entry name" value="GATASE_COBBQ"/>
    <property type="match status" value="1"/>
</dbReference>
<evidence type="ECO:0000255" key="1">
    <source>
        <dbReference type="HAMAP-Rule" id="MF_00028"/>
    </source>
</evidence>
<accession>A6VGF5</accession>
<sequence length="492" mass="54788">MAKFIMVVGTSSNSGKTVLVSGICRMLSNKGYKVAPFKSQNMSLNSRVSIEDGEIAVAQYTQAMAARAEPSVHFNPILLKPKGNFISQVIVHGTPYEDRDYNEYRSNKDDMLEKIKESIDYLDTNYDYVVIEGAGSCCEINLLKDDIANLRIAEISGADAILVSDIDRGGVFAAIYGTVQLLPENWRKLLKGFVINKFRGNIDVLKDGFEKIEELTNIPVIGTIPYDETLILPEEDSQALEGKRVFGNLKSPIEVNIVKFSKIANFTDVDPLSSDCLMRYLDFNDDITGDILILPGTRCSTVEMDLMKKHGMDKKIMEFIERGGIILGICGGYQTLGKMLIDENFSEGDVGTISGLGLFDMETTFGNKKAIKNSTGKISIFDQNFDVAGYELHEGYSVSNETPLISLSRGFGNCGNSYDGSFKVVGNSYIFGTYFHGILENFEFRNYLVNIVNNRKNLSKIENDNYAEIFNKNMDKLSKLIEESLDLSKIIK</sequence>
<protein>
    <recommendedName>
        <fullName evidence="1">Probable cobyric acid synthase</fullName>
    </recommendedName>
</protein>
<organism>
    <name type="scientific">Methanococcus maripaludis (strain C7 / ATCC BAA-1331)</name>
    <dbReference type="NCBI Taxonomy" id="426368"/>
    <lineage>
        <taxon>Archaea</taxon>
        <taxon>Methanobacteriati</taxon>
        <taxon>Methanobacteriota</taxon>
        <taxon>Methanomada group</taxon>
        <taxon>Methanococci</taxon>
        <taxon>Methanococcales</taxon>
        <taxon>Methanococcaceae</taxon>
        <taxon>Methanococcus</taxon>
    </lineage>
</organism>
<name>COBQ_METM7</name>
<reference key="1">
    <citation type="submission" date="2007-06" db="EMBL/GenBank/DDBJ databases">
        <title>Complete sequence of Methanococcus maripaludis C7.</title>
        <authorList>
            <consortium name="US DOE Joint Genome Institute"/>
            <person name="Copeland A."/>
            <person name="Lucas S."/>
            <person name="Lapidus A."/>
            <person name="Barry K."/>
            <person name="Glavina del Rio T."/>
            <person name="Dalin E."/>
            <person name="Tice H."/>
            <person name="Pitluck S."/>
            <person name="Clum A."/>
            <person name="Schmutz J."/>
            <person name="Larimer F."/>
            <person name="Land M."/>
            <person name="Hauser L."/>
            <person name="Kyrpides N."/>
            <person name="Anderson I."/>
            <person name="Sieprawska-Lupa M."/>
            <person name="Whitman W.B."/>
            <person name="Richardson P."/>
        </authorList>
    </citation>
    <scope>NUCLEOTIDE SEQUENCE [LARGE SCALE GENOMIC DNA]</scope>
    <source>
        <strain>C7 / ATCC BAA-1331</strain>
    </source>
</reference>
<comment type="function">
    <text evidence="1">Catalyzes amidations at positions B, D, E, and G on adenosylcobyrinic A,C-diamide. NH(2) groups are provided by glutamine, and one molecule of ATP is hydrogenolyzed for each amidation.</text>
</comment>
<comment type="pathway">
    <text evidence="1">Cofactor biosynthesis; adenosylcobalamin biosynthesis.</text>
</comment>
<comment type="similarity">
    <text evidence="1">Belongs to the CobB/CobQ family. CobQ subfamily.</text>
</comment>
<proteinExistence type="inferred from homology"/>
<keyword id="KW-0169">Cobalamin biosynthesis</keyword>
<keyword id="KW-0315">Glutamine amidotransferase</keyword>
<feature type="chain" id="PRO_1000002365" description="Probable cobyric acid synthase">
    <location>
        <begin position="1"/>
        <end position="492"/>
    </location>
</feature>
<feature type="domain" description="GATase cobBQ-type" evidence="1">
    <location>
        <begin position="252"/>
        <end position="444"/>
    </location>
</feature>
<feature type="active site" description="Nucleophile" evidence="1">
    <location>
        <position position="330"/>
    </location>
</feature>
<feature type="active site" evidence="1">
    <location>
        <position position="436"/>
    </location>
</feature>